<evidence type="ECO:0000255" key="1">
    <source>
        <dbReference type="HAMAP-Rule" id="MF_00382"/>
    </source>
</evidence>
<evidence type="ECO:0000305" key="2"/>
<accession>P66108</accession>
<accession>Q99TI3</accession>
<protein>
    <recommendedName>
        <fullName evidence="1">Large ribosomal subunit protein bL20</fullName>
    </recommendedName>
    <alternativeName>
        <fullName evidence="2">50S ribosomal protein L20</fullName>
    </alternativeName>
</protein>
<gene>
    <name evidence="1" type="primary">rplT</name>
    <name type="ordered locus">SA1502</name>
</gene>
<sequence length="118" mass="13686">MPRVKGGTVTRARRKKTIKLAKGYFGSKHTLYKVAKQQVMKSGQYAFRDRRQRKRDFRKLWITRINAAARQHEMSYSRLMNGLKKAGIDINRKMLSEIAISDEKAFAQLVTKAKDALK</sequence>
<feature type="chain" id="PRO_0000177225" description="Large ribosomal subunit protein bL20">
    <location>
        <begin position="1"/>
        <end position="118"/>
    </location>
</feature>
<organism>
    <name type="scientific">Staphylococcus aureus (strain N315)</name>
    <dbReference type="NCBI Taxonomy" id="158879"/>
    <lineage>
        <taxon>Bacteria</taxon>
        <taxon>Bacillati</taxon>
        <taxon>Bacillota</taxon>
        <taxon>Bacilli</taxon>
        <taxon>Bacillales</taxon>
        <taxon>Staphylococcaceae</taxon>
        <taxon>Staphylococcus</taxon>
    </lineage>
</organism>
<keyword id="KW-0687">Ribonucleoprotein</keyword>
<keyword id="KW-0689">Ribosomal protein</keyword>
<keyword id="KW-0694">RNA-binding</keyword>
<keyword id="KW-0699">rRNA-binding</keyword>
<proteinExistence type="evidence at protein level"/>
<reference key="1">
    <citation type="journal article" date="2001" name="Lancet">
        <title>Whole genome sequencing of meticillin-resistant Staphylococcus aureus.</title>
        <authorList>
            <person name="Kuroda M."/>
            <person name="Ohta T."/>
            <person name="Uchiyama I."/>
            <person name="Baba T."/>
            <person name="Yuzawa H."/>
            <person name="Kobayashi I."/>
            <person name="Cui L."/>
            <person name="Oguchi A."/>
            <person name="Aoki K."/>
            <person name="Nagai Y."/>
            <person name="Lian J.-Q."/>
            <person name="Ito T."/>
            <person name="Kanamori M."/>
            <person name="Matsumaru H."/>
            <person name="Maruyama A."/>
            <person name="Murakami H."/>
            <person name="Hosoyama A."/>
            <person name="Mizutani-Ui Y."/>
            <person name="Takahashi N.K."/>
            <person name="Sawano T."/>
            <person name="Inoue R."/>
            <person name="Kaito C."/>
            <person name="Sekimizu K."/>
            <person name="Hirakawa H."/>
            <person name="Kuhara S."/>
            <person name="Goto S."/>
            <person name="Yabuzaki J."/>
            <person name="Kanehisa M."/>
            <person name="Yamashita A."/>
            <person name="Oshima K."/>
            <person name="Furuya K."/>
            <person name="Yoshino C."/>
            <person name="Shiba T."/>
            <person name="Hattori M."/>
            <person name="Ogasawara N."/>
            <person name="Hayashi H."/>
            <person name="Hiramatsu K."/>
        </authorList>
    </citation>
    <scope>NUCLEOTIDE SEQUENCE [LARGE SCALE GENOMIC DNA]</scope>
    <source>
        <strain>N315</strain>
    </source>
</reference>
<reference key="2">
    <citation type="submission" date="2007-10" db="UniProtKB">
        <title>Shotgun proteomic analysis of total and membrane protein extracts of S. aureus strain N315.</title>
        <authorList>
            <person name="Vaezzadeh A.R."/>
            <person name="Deshusses J."/>
            <person name="Lescuyer P."/>
            <person name="Hochstrasser D.F."/>
        </authorList>
    </citation>
    <scope>IDENTIFICATION BY MASS SPECTROMETRY [LARGE SCALE ANALYSIS]</scope>
    <source>
        <strain>N315</strain>
    </source>
</reference>
<name>RL20_STAAN</name>
<comment type="function">
    <text evidence="1">Binds directly to 23S ribosomal RNA and is necessary for the in vitro assembly process of the 50S ribosomal subunit. It is not involved in the protein synthesizing functions of that subunit.</text>
</comment>
<comment type="similarity">
    <text evidence="1">Belongs to the bacterial ribosomal protein bL20 family.</text>
</comment>
<dbReference type="EMBL" id="BA000018">
    <property type="protein sequence ID" value="BAB42769.1"/>
    <property type="molecule type" value="Genomic_DNA"/>
</dbReference>
<dbReference type="PIR" id="D89951">
    <property type="entry name" value="D89951"/>
</dbReference>
<dbReference type="RefSeq" id="WP_001138360.1">
    <property type="nucleotide sequence ID" value="NC_002745.2"/>
</dbReference>
<dbReference type="SMR" id="P66108"/>
<dbReference type="EnsemblBacteria" id="BAB42769">
    <property type="protein sequence ID" value="BAB42769"/>
    <property type="gene ID" value="BAB42769"/>
</dbReference>
<dbReference type="GeneID" id="98346040"/>
<dbReference type="KEGG" id="sau:SA1502"/>
<dbReference type="HOGENOM" id="CLU_123265_0_1_9"/>
<dbReference type="GO" id="GO:1990904">
    <property type="term" value="C:ribonucleoprotein complex"/>
    <property type="evidence" value="ECO:0007669"/>
    <property type="project" value="UniProtKB-KW"/>
</dbReference>
<dbReference type="GO" id="GO:0005840">
    <property type="term" value="C:ribosome"/>
    <property type="evidence" value="ECO:0007669"/>
    <property type="project" value="UniProtKB-KW"/>
</dbReference>
<dbReference type="GO" id="GO:0019843">
    <property type="term" value="F:rRNA binding"/>
    <property type="evidence" value="ECO:0007669"/>
    <property type="project" value="UniProtKB-UniRule"/>
</dbReference>
<dbReference type="GO" id="GO:0003735">
    <property type="term" value="F:structural constituent of ribosome"/>
    <property type="evidence" value="ECO:0007669"/>
    <property type="project" value="InterPro"/>
</dbReference>
<dbReference type="GO" id="GO:0000027">
    <property type="term" value="P:ribosomal large subunit assembly"/>
    <property type="evidence" value="ECO:0007669"/>
    <property type="project" value="UniProtKB-UniRule"/>
</dbReference>
<dbReference type="GO" id="GO:0006412">
    <property type="term" value="P:translation"/>
    <property type="evidence" value="ECO:0007669"/>
    <property type="project" value="InterPro"/>
</dbReference>
<dbReference type="CDD" id="cd07026">
    <property type="entry name" value="Ribosomal_L20"/>
    <property type="match status" value="1"/>
</dbReference>
<dbReference type="FunFam" id="1.10.1900.20:FF:000001">
    <property type="entry name" value="50S ribosomal protein L20"/>
    <property type="match status" value="1"/>
</dbReference>
<dbReference type="Gene3D" id="6.10.160.10">
    <property type="match status" value="1"/>
</dbReference>
<dbReference type="Gene3D" id="1.10.1900.20">
    <property type="entry name" value="Ribosomal protein L20"/>
    <property type="match status" value="1"/>
</dbReference>
<dbReference type="HAMAP" id="MF_00382">
    <property type="entry name" value="Ribosomal_bL20"/>
    <property type="match status" value="1"/>
</dbReference>
<dbReference type="InterPro" id="IPR005813">
    <property type="entry name" value="Ribosomal_bL20"/>
</dbReference>
<dbReference type="InterPro" id="IPR049946">
    <property type="entry name" value="RIBOSOMAL_L20_CS"/>
</dbReference>
<dbReference type="InterPro" id="IPR035566">
    <property type="entry name" value="Ribosomal_protein_bL20_C"/>
</dbReference>
<dbReference type="NCBIfam" id="TIGR01032">
    <property type="entry name" value="rplT_bact"/>
    <property type="match status" value="1"/>
</dbReference>
<dbReference type="PANTHER" id="PTHR10986">
    <property type="entry name" value="39S RIBOSOMAL PROTEIN L20"/>
    <property type="match status" value="1"/>
</dbReference>
<dbReference type="Pfam" id="PF00453">
    <property type="entry name" value="Ribosomal_L20"/>
    <property type="match status" value="1"/>
</dbReference>
<dbReference type="PRINTS" id="PR00062">
    <property type="entry name" value="RIBOSOMALL20"/>
</dbReference>
<dbReference type="SUPFAM" id="SSF74731">
    <property type="entry name" value="Ribosomal protein L20"/>
    <property type="match status" value="1"/>
</dbReference>
<dbReference type="PROSITE" id="PS00937">
    <property type="entry name" value="RIBOSOMAL_L20"/>
    <property type="match status" value="1"/>
</dbReference>